<keyword id="KW-0002">3D-structure</keyword>
<keyword id="KW-0378">Hydrolase</keyword>
<keyword id="KW-0460">Magnesium</keyword>
<keyword id="KW-0479">Metal-binding</keyword>
<evidence type="ECO:0000255" key="1">
    <source>
        <dbReference type="HAMAP-Rule" id="MF_01568"/>
    </source>
</evidence>
<evidence type="ECO:0000269" key="2">
    <source>
    </source>
</evidence>
<evidence type="ECO:0000303" key="3">
    <source>
    </source>
</evidence>
<evidence type="ECO:0000305" key="4"/>
<evidence type="ECO:0000305" key="5">
    <source>
    </source>
</evidence>
<evidence type="ECO:0007744" key="6">
    <source>
        <dbReference type="PDB" id="7D8G"/>
    </source>
</evidence>
<evidence type="ECO:0007744" key="7">
    <source>
        <dbReference type="PDB" id="7D8I"/>
    </source>
</evidence>
<evidence type="ECO:0007744" key="8">
    <source>
        <dbReference type="PDB" id="7D8L"/>
    </source>
</evidence>
<evidence type="ECO:0007744" key="9">
    <source>
        <dbReference type="PDB" id="7D8Q"/>
    </source>
</evidence>
<evidence type="ECO:0007829" key="10">
    <source>
        <dbReference type="PDB" id="7D8G"/>
    </source>
</evidence>
<feature type="chain" id="PRO_0000248109" description="Nucleoside triphosphate/diphosphate phosphatase">
    <location>
        <begin position="1"/>
        <end position="180"/>
    </location>
</feature>
<feature type="active site" description="Proton donor" evidence="1 5">
    <location>
        <position position="26"/>
    </location>
</feature>
<feature type="binding site" evidence="5 8">
    <location>
        <position position="25"/>
    </location>
    <ligand>
        <name>GTP</name>
        <dbReference type="ChEBI" id="CHEBI:37565"/>
    </ligand>
</feature>
<feature type="binding site" evidence="5 8">
    <location>
        <position position="26"/>
    </location>
    <ligand>
        <name>GTP</name>
        <dbReference type="ChEBI" id="CHEBI:37565"/>
    </ligand>
</feature>
<feature type="binding site" evidence="5 8">
    <location>
        <position position="45"/>
    </location>
    <ligand>
        <name>GTP</name>
        <dbReference type="ChEBI" id="CHEBI:37565"/>
    </ligand>
</feature>
<feature type="binding site" evidence="5 8">
    <location>
        <position position="88"/>
    </location>
    <ligand>
        <name>GTP</name>
        <dbReference type="ChEBI" id="CHEBI:37565"/>
    </ligand>
</feature>
<feature type="binding site" evidence="1 2 6 7 8 9">
    <location>
        <position position="90"/>
    </location>
    <ligand>
        <name>Mg(2+)</name>
        <dbReference type="ChEBI" id="CHEBI:18420"/>
        <label>1</label>
    </ligand>
</feature>
<feature type="binding site" evidence="1 2 6 7 8 9">
    <location>
        <position position="106"/>
    </location>
    <ligand>
        <name>Mg(2+)</name>
        <dbReference type="ChEBI" id="CHEBI:18420"/>
        <label>1</label>
    </ligand>
</feature>
<feature type="binding site" evidence="1 2 6 7 8 9">
    <location>
        <position position="108"/>
    </location>
    <ligand>
        <name>Mg(2+)</name>
        <dbReference type="ChEBI" id="CHEBI:18420"/>
        <label>2</label>
    </ligand>
</feature>
<feature type="binding site" evidence="1 2 6 7 8 9">
    <location>
        <position position="110"/>
    </location>
    <ligand>
        <name>Mg(2+)</name>
        <dbReference type="ChEBI" id="CHEBI:18420"/>
        <label>1</label>
    </ligand>
</feature>
<feature type="binding site" evidence="1 2 6 7 8 9">
    <location>
        <position position="110"/>
    </location>
    <ligand>
        <name>Mg(2+)</name>
        <dbReference type="ChEBI" id="CHEBI:18420"/>
        <label>2</label>
    </ligand>
</feature>
<feature type="binding site" evidence="1 2 6 7 8 9">
    <location>
        <position position="123"/>
    </location>
    <ligand>
        <name>Mg(2+)</name>
        <dbReference type="ChEBI" id="CHEBI:18420"/>
        <label>2</label>
    </ligand>
</feature>
<feature type="binding site" evidence="1 2 6 7 8 9">
    <location>
        <position position="126"/>
    </location>
    <ligand>
        <name>Mg(2+)</name>
        <dbReference type="ChEBI" id="CHEBI:18420"/>
        <label>2</label>
    </ligand>
</feature>
<feature type="mutagenesis site" description="Loss of activity with GTP. Increases the specificity to ATP." evidence="2">
    <original>N</original>
    <variation>A</variation>
    <location>
        <position position="45"/>
    </location>
</feature>
<feature type="mutagenesis site" description="Decreases catalytic efficiency with GDP and ADP as substrate." evidence="2">
    <original>W</original>
    <variation>A</variation>
    <location>
        <position position="58"/>
    </location>
</feature>
<feature type="mutagenesis site" description="Strong decrease in catalytic efficiency with GTP, GDP and ADP as substrate. Small decrease in catalytic efficiency with ATP as substrate." evidence="2">
    <original>Y</original>
    <variation>A</variation>
    <location>
        <position position="88"/>
    </location>
</feature>
<feature type="mutagenesis site" description="Loss of activity." evidence="2">
    <original>N</original>
    <variation>A</variation>
    <location>
        <position position="90"/>
    </location>
</feature>
<feature type="mutagenesis site" description="Loss of activity." evidence="2">
    <original>D</original>
    <variation>A</variation>
    <location>
        <position position="106"/>
    </location>
</feature>
<feature type="mutagenesis site" description="Loss of activity." evidence="2">
    <original>D</original>
    <variation>A</variation>
    <location>
        <position position="108"/>
    </location>
</feature>
<feature type="mutagenesis site" description="Loss of activity." evidence="2">
    <original>D</original>
    <variation>A</variation>
    <location>
        <position position="110"/>
    </location>
</feature>
<feature type="mutagenesis site" description="Loss of activity." evidence="2">
    <original>D</original>
    <variation>A</variation>
    <location>
        <position position="123"/>
    </location>
</feature>
<feature type="mutagenesis site" description="Strong decrease in activity." evidence="2">
    <original>E</original>
    <variation>A</variation>
    <location>
        <position position="126"/>
    </location>
</feature>
<feature type="strand" evidence="10">
    <location>
        <begin position="12"/>
        <end position="18"/>
    </location>
</feature>
<feature type="strand" evidence="10">
    <location>
        <begin position="24"/>
        <end position="36"/>
    </location>
</feature>
<feature type="strand" evidence="10">
    <location>
        <begin position="38"/>
        <end position="47"/>
    </location>
</feature>
<feature type="strand" evidence="10">
    <location>
        <begin position="49"/>
        <end position="52"/>
    </location>
</feature>
<feature type="strand" evidence="10">
    <location>
        <begin position="57"/>
        <end position="59"/>
    </location>
</feature>
<feature type="strand" evidence="10">
    <location>
        <begin position="64"/>
        <end position="81"/>
    </location>
</feature>
<feature type="strand" evidence="10">
    <location>
        <begin position="84"/>
        <end position="92"/>
    </location>
</feature>
<feature type="strand" evidence="10">
    <location>
        <begin position="102"/>
        <end position="113"/>
    </location>
</feature>
<feature type="strand" evidence="10">
    <location>
        <begin position="119"/>
        <end position="122"/>
    </location>
</feature>
<feature type="helix" evidence="10">
    <location>
        <begin position="124"/>
        <end position="133"/>
    </location>
</feature>
<feature type="helix" evidence="10">
    <location>
        <begin position="138"/>
        <end position="157"/>
    </location>
</feature>
<feature type="helix" evidence="10">
    <location>
        <begin position="160"/>
        <end position="162"/>
    </location>
</feature>
<feature type="helix" evidence="10">
    <location>
        <begin position="164"/>
        <end position="177"/>
    </location>
</feature>
<name>NTDP_STAAN</name>
<accession>Q7A4T2</accession>
<gene>
    <name type="ordered locus">SA1684</name>
</gene>
<dbReference type="EC" id="3.6.1.15" evidence="1 2"/>
<dbReference type="EC" id="3.6.1.6" evidence="1 2"/>
<dbReference type="EMBL" id="BA000018">
    <property type="protein sequence ID" value="BAB42953.1"/>
    <property type="molecule type" value="Genomic_DNA"/>
</dbReference>
<dbReference type="PIR" id="B89974">
    <property type="entry name" value="B89974"/>
</dbReference>
<dbReference type="RefSeq" id="WP_000251253.1">
    <property type="nucleotide sequence ID" value="NC_002745.2"/>
</dbReference>
<dbReference type="PDB" id="7D8G">
    <property type="method" value="X-ray"/>
    <property type="resolution" value="1.50 A"/>
    <property type="chains" value="A=1-180"/>
</dbReference>
<dbReference type="PDB" id="7D8I">
    <property type="method" value="X-ray"/>
    <property type="resolution" value="1.62 A"/>
    <property type="chains" value="A=1-180"/>
</dbReference>
<dbReference type="PDB" id="7D8L">
    <property type="method" value="X-ray"/>
    <property type="resolution" value="1.55 A"/>
    <property type="chains" value="A=1-180"/>
</dbReference>
<dbReference type="PDB" id="7D8Q">
    <property type="method" value="X-ray"/>
    <property type="resolution" value="1.50 A"/>
    <property type="chains" value="A=1-180"/>
</dbReference>
<dbReference type="PDBsum" id="7D8G"/>
<dbReference type="PDBsum" id="7D8I"/>
<dbReference type="PDBsum" id="7D8L"/>
<dbReference type="PDBsum" id="7D8Q"/>
<dbReference type="SMR" id="Q7A4T2"/>
<dbReference type="EnsemblBacteria" id="BAB42953">
    <property type="protein sequence ID" value="BAB42953"/>
    <property type="gene ID" value="BAB42953"/>
</dbReference>
<dbReference type="KEGG" id="sau:SA1684"/>
<dbReference type="HOGENOM" id="CLU_109787_1_0_9"/>
<dbReference type="BRENDA" id="3.6.1.6">
    <property type="organism ID" value="3352"/>
</dbReference>
<dbReference type="GO" id="GO:0000287">
    <property type="term" value="F:magnesium ion binding"/>
    <property type="evidence" value="ECO:0007669"/>
    <property type="project" value="UniProtKB-UniRule"/>
</dbReference>
<dbReference type="GO" id="GO:0017110">
    <property type="term" value="F:nucleoside diphosphate phosphatase activity"/>
    <property type="evidence" value="ECO:0007669"/>
    <property type="project" value="UniProtKB-UniRule"/>
</dbReference>
<dbReference type="GO" id="GO:0017111">
    <property type="term" value="F:ribonucleoside triphosphate phosphatase activity"/>
    <property type="evidence" value="ECO:0007669"/>
    <property type="project" value="UniProtKB-UniRule"/>
</dbReference>
<dbReference type="Gene3D" id="2.40.380.10">
    <property type="entry name" value="FomD-like"/>
    <property type="match status" value="1"/>
</dbReference>
<dbReference type="HAMAP" id="MF_01568">
    <property type="entry name" value="Ntdp"/>
    <property type="match status" value="1"/>
</dbReference>
<dbReference type="InterPro" id="IPR007295">
    <property type="entry name" value="DUF402"/>
</dbReference>
<dbReference type="InterPro" id="IPR035930">
    <property type="entry name" value="FomD-like_sf"/>
</dbReference>
<dbReference type="InterPro" id="IPR050212">
    <property type="entry name" value="Ntdp-like"/>
</dbReference>
<dbReference type="InterPro" id="IPR016882">
    <property type="entry name" value="SA1684"/>
</dbReference>
<dbReference type="NCBIfam" id="NF010183">
    <property type="entry name" value="PRK13662.1"/>
    <property type="match status" value="1"/>
</dbReference>
<dbReference type="PANTHER" id="PTHR39159">
    <property type="match status" value="1"/>
</dbReference>
<dbReference type="PANTHER" id="PTHR39159:SF1">
    <property type="entry name" value="UPF0374 PROTEIN YGAC"/>
    <property type="match status" value="1"/>
</dbReference>
<dbReference type="Pfam" id="PF04167">
    <property type="entry name" value="DUF402"/>
    <property type="match status" value="1"/>
</dbReference>
<dbReference type="PIRSF" id="PIRSF028345">
    <property type="entry name" value="UCP028345"/>
    <property type="match status" value="1"/>
</dbReference>
<dbReference type="SUPFAM" id="SSF159234">
    <property type="entry name" value="FomD-like"/>
    <property type="match status" value="1"/>
</dbReference>
<organism>
    <name type="scientific">Staphylococcus aureus (strain N315)</name>
    <dbReference type="NCBI Taxonomy" id="158879"/>
    <lineage>
        <taxon>Bacteria</taxon>
        <taxon>Bacillati</taxon>
        <taxon>Bacillota</taxon>
        <taxon>Bacilli</taxon>
        <taxon>Bacillales</taxon>
        <taxon>Staphylococcaceae</taxon>
        <taxon>Staphylococcus</taxon>
    </lineage>
</organism>
<sequence>MVRESIPKEGENIKIQSYKHDGKIHRVWSETTILKGTDHVVIGGNDHTLVTESDGRTWITREPAIVYFHSEYWFNVICMFREDGIYYYCNLSSPFVCDEEALKYIDYDLDIKVYPNGKYHLLDEDEYEQHMNQMNYPHDIDIILRRNVDILQQWIEQKKGPFAPDFIKVWKERYKKIRQY</sequence>
<comment type="function">
    <text evidence="2">Has nucleoside phosphatase activity towards nucleoside triphosphates and nucleoside diphosphates (PubMed:33955674). Can hydrolyze GTP, ATP, GDP and ADP (PubMed:33955674). GTP is the most preferred substrate, with the highest substrate affinity and catalytic efficiency (PubMed:33955674).</text>
</comment>
<comment type="catalytic activity">
    <reaction evidence="1 2">
        <text>a ribonucleoside 5'-triphosphate + H2O = a ribonucleoside 5'-diphosphate + phosphate + H(+)</text>
        <dbReference type="Rhea" id="RHEA:23680"/>
        <dbReference type="ChEBI" id="CHEBI:15377"/>
        <dbReference type="ChEBI" id="CHEBI:15378"/>
        <dbReference type="ChEBI" id="CHEBI:43474"/>
        <dbReference type="ChEBI" id="CHEBI:57930"/>
        <dbReference type="ChEBI" id="CHEBI:61557"/>
        <dbReference type="EC" id="3.6.1.15"/>
    </reaction>
</comment>
<comment type="catalytic activity">
    <reaction evidence="1 2">
        <text>a ribonucleoside 5'-diphosphate + H2O = a ribonucleoside 5'-phosphate + phosphate + H(+)</text>
        <dbReference type="Rhea" id="RHEA:36799"/>
        <dbReference type="ChEBI" id="CHEBI:15377"/>
        <dbReference type="ChEBI" id="CHEBI:15378"/>
        <dbReference type="ChEBI" id="CHEBI:43474"/>
        <dbReference type="ChEBI" id="CHEBI:57930"/>
        <dbReference type="ChEBI" id="CHEBI:58043"/>
        <dbReference type="EC" id="3.6.1.6"/>
    </reaction>
</comment>
<comment type="catalytic activity">
    <reaction evidence="2">
        <text>GTP + H2O = GDP + phosphate + H(+)</text>
        <dbReference type="Rhea" id="RHEA:19669"/>
        <dbReference type="ChEBI" id="CHEBI:15377"/>
        <dbReference type="ChEBI" id="CHEBI:15378"/>
        <dbReference type="ChEBI" id="CHEBI:37565"/>
        <dbReference type="ChEBI" id="CHEBI:43474"/>
        <dbReference type="ChEBI" id="CHEBI:58189"/>
    </reaction>
</comment>
<comment type="catalytic activity">
    <reaction evidence="2">
        <text>ATP + H2O = ADP + phosphate + H(+)</text>
        <dbReference type="Rhea" id="RHEA:13065"/>
        <dbReference type="ChEBI" id="CHEBI:15377"/>
        <dbReference type="ChEBI" id="CHEBI:15378"/>
        <dbReference type="ChEBI" id="CHEBI:30616"/>
        <dbReference type="ChEBI" id="CHEBI:43474"/>
        <dbReference type="ChEBI" id="CHEBI:456216"/>
    </reaction>
</comment>
<comment type="catalytic activity">
    <reaction evidence="2">
        <text>GDP + H2O = GMP + phosphate + H(+)</text>
        <dbReference type="Rhea" id="RHEA:22156"/>
        <dbReference type="ChEBI" id="CHEBI:15377"/>
        <dbReference type="ChEBI" id="CHEBI:15378"/>
        <dbReference type="ChEBI" id="CHEBI:43474"/>
        <dbReference type="ChEBI" id="CHEBI:58115"/>
        <dbReference type="ChEBI" id="CHEBI:58189"/>
        <dbReference type="EC" id="3.6.1.6"/>
    </reaction>
</comment>
<comment type="catalytic activity">
    <reaction evidence="2">
        <text>ADP + H2O = AMP + phosphate + H(+)</text>
        <dbReference type="Rhea" id="RHEA:61436"/>
        <dbReference type="ChEBI" id="CHEBI:15377"/>
        <dbReference type="ChEBI" id="CHEBI:15378"/>
        <dbReference type="ChEBI" id="CHEBI:43474"/>
        <dbReference type="ChEBI" id="CHEBI:456215"/>
        <dbReference type="ChEBI" id="CHEBI:456216"/>
        <dbReference type="EC" id="3.6.1.6"/>
    </reaction>
</comment>
<comment type="cofactor">
    <cofactor evidence="1 2">
        <name>Mg(2+)</name>
        <dbReference type="ChEBI" id="CHEBI:18420"/>
    </cofactor>
    <cofactor evidence="2">
        <name>Mn(2+)</name>
        <dbReference type="ChEBI" id="CHEBI:29035"/>
    </cofactor>
    <cofactor evidence="2">
        <name>Co(2+)</name>
        <dbReference type="ChEBI" id="CHEBI:48828"/>
    </cofactor>
    <text evidence="2">Activity is highest with Mn(2+), followed by Co(2+) and Mg(2+), but the enzyme probably uses Mg(2+) under physiological conditions (PubMed:33955674). Has low activity with Ca(2+) (PubMed:33955674). Cannot use Cu(2+) or Zn(2+) ions (PubMed:33955674).</text>
</comment>
<comment type="biophysicochemical properties">
    <kinetics>
        <KM evidence="2">380 uM for ATP</KM>
        <KM evidence="2">645.6 uM for ADP</KM>
        <KM evidence="2">84.7 uM for GTP</KM>
        <KM evidence="2">211.5 uM for GDP</KM>
        <Vmax evidence="2">1.7 nmol/min/ug enzyme with ATP as substrate</Vmax>
        <Vmax evidence="2">6.9 nmol/min/ug enzyme with ADP as substrate</Vmax>
        <Vmax evidence="2">5.2 nmol/min/ug enzyme with GTP as substrate</Vmax>
        <Vmax evidence="2">2.1 nmol/min/ug enzyme with GDP as substrate</Vmax>
        <text evidence="2">kcat is 34 min(-1) with ATP as substrate. kcat is 138 min(-1) with ADP as substrate. kcat is 104 min(-1) with GTP as substrate. kcat is 42 min(-1) with GDP as substrate.</text>
    </kinetics>
</comment>
<comment type="subunit">
    <text evidence="2">Monomer in solution.</text>
</comment>
<comment type="similarity">
    <text evidence="1 4">Belongs to the Ntdp family.</text>
</comment>
<proteinExistence type="evidence at protein level"/>
<protein>
    <recommendedName>
        <fullName evidence="1 4">Nucleoside triphosphate/diphosphate phosphatase</fullName>
        <ecNumber evidence="1 2">3.6.1.15</ecNumber>
        <ecNumber evidence="1 2">3.6.1.6</ecNumber>
    </recommendedName>
    <alternativeName>
        <fullName evidence="3">Nucleoside tri- and diphosphatase</fullName>
        <shortName evidence="3">Ntdp</shortName>
    </alternativeName>
</protein>
<reference key="1">
    <citation type="journal article" date="2001" name="Lancet">
        <title>Whole genome sequencing of meticillin-resistant Staphylococcus aureus.</title>
        <authorList>
            <person name="Kuroda M."/>
            <person name="Ohta T."/>
            <person name="Uchiyama I."/>
            <person name="Baba T."/>
            <person name="Yuzawa H."/>
            <person name="Kobayashi I."/>
            <person name="Cui L."/>
            <person name="Oguchi A."/>
            <person name="Aoki K."/>
            <person name="Nagai Y."/>
            <person name="Lian J.-Q."/>
            <person name="Ito T."/>
            <person name="Kanamori M."/>
            <person name="Matsumaru H."/>
            <person name="Maruyama A."/>
            <person name="Murakami H."/>
            <person name="Hosoyama A."/>
            <person name="Mizutani-Ui Y."/>
            <person name="Takahashi N.K."/>
            <person name="Sawano T."/>
            <person name="Inoue R."/>
            <person name="Kaito C."/>
            <person name="Sekimizu K."/>
            <person name="Hirakawa H."/>
            <person name="Kuhara S."/>
            <person name="Goto S."/>
            <person name="Yabuzaki J."/>
            <person name="Kanehisa M."/>
            <person name="Yamashita A."/>
            <person name="Oshima K."/>
            <person name="Furuya K."/>
            <person name="Yoshino C."/>
            <person name="Shiba T."/>
            <person name="Hattori M."/>
            <person name="Ogasawara N."/>
            <person name="Hayashi H."/>
            <person name="Hiramatsu K."/>
        </authorList>
    </citation>
    <scope>NUCLEOTIDE SEQUENCE [LARGE SCALE GENOMIC DNA]</scope>
    <source>
        <strain>N315</strain>
    </source>
</reference>
<reference evidence="6 7 8 9" key="2">
    <citation type="journal article" date="2021" name="FEBS J.">
        <title>The structural mechanism for the nucleoside tri- and diphosphate hydrolysis activity of Ntdp from Staphylococcus aureus.</title>
        <authorList>
            <person name="Wang Z."/>
            <person name="Shen H."/>
            <person name="He B."/>
            <person name="Teng M."/>
            <person name="Guo Q."/>
            <person name="Li X."/>
        </authorList>
    </citation>
    <scope>X-RAY CRYSTALLOGRAPHY (1.50 ANGSTROMS) OF APOENZYME AND IN COMPLEXES WITH MAGNESIUM; CALCIUM AND SUBSTRATE ANALOGS</scope>
    <scope>FUNCTION</scope>
    <scope>CATALYTIC ACTIVITY</scope>
    <scope>COFACTOR</scope>
    <scope>BIOPHYSICOCHEMICAL PROPERTIES</scope>
    <scope>SUBUNIT</scope>
    <scope>MUTAGENESIS OF ASN-45; TRP-58; TYR-88; ASN-90; ASP-106; ASP-108; ASP-110; ASP-123 AND GLU-126</scope>
    <source>
        <strain>N315</strain>
    </source>
</reference>